<protein>
    <recommendedName>
        <fullName evidence="1">Coenzyme PQQ synthesis protein B</fullName>
    </recommendedName>
    <alternativeName>
        <fullName evidence="1">Pyrroloquinoline quinone biosynthesis protein B</fullName>
    </alternativeName>
</protein>
<feature type="chain" id="PRO_1000061657" description="Coenzyme PQQ synthesis protein B">
    <location>
        <begin position="1"/>
        <end position="303"/>
    </location>
</feature>
<sequence>MFVQILGSAAGGGFPQWNCNCVNCAGFRDGSLNAQARTQSSIAISDDGVNWVLCNASPDIRAQLQSFAPMQPGRALRDTGISAIILMDSQIDHTTGLLSLREGCPHQVWCTDMVHEDLSTGFPLFTMLKHWNGGLDWNRIELDQSFTVAACPSLRFTPLPLRSAAPPYSPHRFDPHPGDNIGLIVEDLGTGGKLFYAPGLGKVDAPLLEIMAGSDCVLVDGTMWDDDEMQRRGVGTRTGREMGHLAQNGPGGMLEVLEQLPEQRKVLIHINNTNPILDEDSPERAELVRRNVEVAYDGMSIVL</sequence>
<organism>
    <name type="scientific">Pseudomonas fluorescens (strain Pf0-1)</name>
    <dbReference type="NCBI Taxonomy" id="205922"/>
    <lineage>
        <taxon>Bacteria</taxon>
        <taxon>Pseudomonadati</taxon>
        <taxon>Pseudomonadota</taxon>
        <taxon>Gammaproteobacteria</taxon>
        <taxon>Pseudomonadales</taxon>
        <taxon>Pseudomonadaceae</taxon>
        <taxon>Pseudomonas</taxon>
    </lineage>
</organism>
<proteinExistence type="inferred from homology"/>
<gene>
    <name evidence="1" type="primary">pqqB</name>
    <name type="ordered locus">Pfl01_5158</name>
</gene>
<evidence type="ECO:0000255" key="1">
    <source>
        <dbReference type="HAMAP-Rule" id="MF_00653"/>
    </source>
</evidence>
<accession>Q3K5Q9</accession>
<name>PQQB_PSEPF</name>
<comment type="function">
    <text evidence="1">May be involved in the transport of PQQ or its precursor to the periplasm.</text>
</comment>
<comment type="pathway">
    <text evidence="1">Cofactor biosynthesis; pyrroloquinoline quinone biosynthesis.</text>
</comment>
<comment type="similarity">
    <text evidence="1">Belongs to the PqqB family.</text>
</comment>
<reference key="1">
    <citation type="journal article" date="2009" name="Genome Biol.">
        <title>Genomic and genetic analyses of diversity and plant interactions of Pseudomonas fluorescens.</title>
        <authorList>
            <person name="Silby M.W."/>
            <person name="Cerdeno-Tarraga A.M."/>
            <person name="Vernikos G.S."/>
            <person name="Giddens S.R."/>
            <person name="Jackson R.W."/>
            <person name="Preston G.M."/>
            <person name="Zhang X.-X."/>
            <person name="Moon C.D."/>
            <person name="Gehrig S.M."/>
            <person name="Godfrey S.A.C."/>
            <person name="Knight C.G."/>
            <person name="Malone J.G."/>
            <person name="Robinson Z."/>
            <person name="Spiers A.J."/>
            <person name="Harris S."/>
            <person name="Challis G.L."/>
            <person name="Yaxley A.M."/>
            <person name="Harris D."/>
            <person name="Seeger K."/>
            <person name="Murphy L."/>
            <person name="Rutter S."/>
            <person name="Squares R."/>
            <person name="Quail M.A."/>
            <person name="Saunders E."/>
            <person name="Mavromatis K."/>
            <person name="Brettin T.S."/>
            <person name="Bentley S.D."/>
            <person name="Hothersall J."/>
            <person name="Stephens E."/>
            <person name="Thomas C.M."/>
            <person name="Parkhill J."/>
            <person name="Levy S.B."/>
            <person name="Rainey P.B."/>
            <person name="Thomson N.R."/>
        </authorList>
    </citation>
    <scope>NUCLEOTIDE SEQUENCE [LARGE SCALE GENOMIC DNA]</scope>
    <source>
        <strain>Pf0-1</strain>
    </source>
</reference>
<keyword id="KW-0884">PQQ biosynthesis</keyword>
<keyword id="KW-0813">Transport</keyword>
<dbReference type="EMBL" id="CP000094">
    <property type="protein sequence ID" value="ABA76895.1"/>
    <property type="molecule type" value="Genomic_DNA"/>
</dbReference>
<dbReference type="RefSeq" id="WP_011336227.1">
    <property type="nucleotide sequence ID" value="NC_007492.2"/>
</dbReference>
<dbReference type="SMR" id="Q3K5Q9"/>
<dbReference type="KEGG" id="pfo:Pfl01_5158"/>
<dbReference type="eggNOG" id="COG1235">
    <property type="taxonomic scope" value="Bacteria"/>
</dbReference>
<dbReference type="HOGENOM" id="CLU_061120_0_0_6"/>
<dbReference type="UniPathway" id="UPA00539"/>
<dbReference type="Proteomes" id="UP000002704">
    <property type="component" value="Chromosome"/>
</dbReference>
<dbReference type="GO" id="GO:0018189">
    <property type="term" value="P:pyrroloquinoline quinone biosynthetic process"/>
    <property type="evidence" value="ECO:0007669"/>
    <property type="project" value="UniProtKB-UniRule"/>
</dbReference>
<dbReference type="CDD" id="cd16274">
    <property type="entry name" value="PQQB-like_MBL-fold"/>
    <property type="match status" value="1"/>
</dbReference>
<dbReference type="Gene3D" id="3.60.15.10">
    <property type="entry name" value="Ribonuclease Z/Hydroxyacylglutathione hydrolase-like"/>
    <property type="match status" value="1"/>
</dbReference>
<dbReference type="HAMAP" id="MF_00653">
    <property type="entry name" value="PQQ_syn_PqqB"/>
    <property type="match status" value="1"/>
</dbReference>
<dbReference type="InterPro" id="IPR001279">
    <property type="entry name" value="Metallo-B-lactamas"/>
</dbReference>
<dbReference type="InterPro" id="IPR011842">
    <property type="entry name" value="PQQ_synth_PqqB"/>
</dbReference>
<dbReference type="InterPro" id="IPR036866">
    <property type="entry name" value="RibonucZ/Hydroxyglut_hydro"/>
</dbReference>
<dbReference type="NCBIfam" id="TIGR02108">
    <property type="entry name" value="PQQ_syn_pqqB"/>
    <property type="match status" value="1"/>
</dbReference>
<dbReference type="PANTHER" id="PTHR42663:SF7">
    <property type="entry name" value="COENZYME PQQ SYNTHESIS PROTEIN B"/>
    <property type="match status" value="1"/>
</dbReference>
<dbReference type="PANTHER" id="PTHR42663">
    <property type="entry name" value="HYDROLASE C777.06C-RELATED-RELATED"/>
    <property type="match status" value="1"/>
</dbReference>
<dbReference type="Pfam" id="PF12706">
    <property type="entry name" value="Lactamase_B_2"/>
    <property type="match status" value="1"/>
</dbReference>
<dbReference type="SUPFAM" id="SSF56281">
    <property type="entry name" value="Metallo-hydrolase/oxidoreductase"/>
    <property type="match status" value="1"/>
</dbReference>